<reference key="1">
    <citation type="submission" date="1998-01" db="EMBL/GenBank/DDBJ databases">
        <authorList>
            <person name="Lu H."/>
            <person name="McKnight T.D."/>
        </authorList>
    </citation>
    <scope>NUCLEOTIDE SEQUENCE [GENOMIC DNA / MRNA]</scope>
</reference>
<accession>O50046</accession>
<feature type="transit peptide" description="Chloroplast" evidence="2">
    <location>
        <begin position="1"/>
        <end status="unknown"/>
    </location>
</feature>
<feature type="chain" id="PRO_0000035785" description="Tryptophan synthase beta chain 2, chloroplastic">
    <location>
        <begin status="unknown"/>
        <end position="466"/>
    </location>
</feature>
<feature type="modified residue" description="N6-(pyridoxal phosphate)lysine" evidence="1">
    <location>
        <position position="161"/>
    </location>
</feature>
<sequence>MAVYTNPACRTNTSAFPGPYRPYSNPSRFSFNLDKFRPRTSAIKVPSICCTIAREMEKERSEREPDVLQRPDSFGRFGKFGGKYVPETLMYALTELESAFRSLSGDQVFQKELDGILKDYVGRESPLYFAERLTLHYKRPNGEGPEIYLKREDLNHTGAHKINNAVAQALLAKRLGKKRIIAETGAGQHGVATATVCARFGLQCVIYMGAQDMERQALNVFRMRLLGAEVRAVHSGTATLKDATSEAIRDWVTNVESTHYILGSVAGPHPYPMMVREFHAVIGKETRKQALEKWGGKPDVLVACVGGGSNAMGLFHEFVDDKDVRMIGVEAAGFGLDSGKHAATLTKGEVGVLHGAMSYLLQDDDGQIIEPHSISAGLDYPGVGPEHSFLKDIGRAEYYCCTDEEALEAFKRLSRLEGIIPALETSHALAFLEKLCPTLPNGTKVVLNCSGRGDKDVHTAIKHLQV</sequence>
<organism>
    <name type="scientific">Camptotheca acuminata</name>
    <name type="common">Happy tree</name>
    <dbReference type="NCBI Taxonomy" id="16922"/>
    <lineage>
        <taxon>Eukaryota</taxon>
        <taxon>Viridiplantae</taxon>
        <taxon>Streptophyta</taxon>
        <taxon>Embryophyta</taxon>
        <taxon>Tracheophyta</taxon>
        <taxon>Spermatophyta</taxon>
        <taxon>Magnoliopsida</taxon>
        <taxon>eudicotyledons</taxon>
        <taxon>Gunneridae</taxon>
        <taxon>Pentapetalae</taxon>
        <taxon>asterids</taxon>
        <taxon>Cornales</taxon>
        <taxon>Nyssaceae</taxon>
        <taxon>Camptotheca</taxon>
    </lineage>
</organism>
<name>TRPB_CAMAC</name>
<evidence type="ECO:0000250" key="1"/>
<evidence type="ECO:0000255" key="2"/>
<evidence type="ECO:0000305" key="3"/>
<keyword id="KW-0028">Amino-acid biosynthesis</keyword>
<keyword id="KW-0057">Aromatic amino acid biosynthesis</keyword>
<keyword id="KW-0150">Chloroplast</keyword>
<keyword id="KW-0456">Lyase</keyword>
<keyword id="KW-0934">Plastid</keyword>
<keyword id="KW-0663">Pyridoxal phosphate</keyword>
<keyword id="KW-0809">Transit peptide</keyword>
<keyword id="KW-0822">Tryptophan biosynthesis</keyword>
<protein>
    <recommendedName>
        <fullName>Tryptophan synthase beta chain 2, chloroplastic</fullName>
        <ecNumber>4.2.1.20</ecNumber>
    </recommendedName>
</protein>
<dbReference type="EC" id="4.2.1.20"/>
<dbReference type="EMBL" id="AF042321">
    <property type="protein sequence ID" value="AAB97526.1"/>
    <property type="molecule type" value="Genomic_DNA"/>
</dbReference>
<dbReference type="EMBL" id="AF042320">
    <property type="protein sequence ID" value="AAB97087.1"/>
    <property type="molecule type" value="mRNA"/>
</dbReference>
<dbReference type="SMR" id="O50046"/>
<dbReference type="UniPathway" id="UPA00035">
    <property type="reaction ID" value="UER00044"/>
</dbReference>
<dbReference type="GO" id="GO:0009570">
    <property type="term" value="C:chloroplast stroma"/>
    <property type="evidence" value="ECO:0007669"/>
    <property type="project" value="TreeGrafter"/>
</dbReference>
<dbReference type="GO" id="GO:0004834">
    <property type="term" value="F:tryptophan synthase activity"/>
    <property type="evidence" value="ECO:0007669"/>
    <property type="project" value="UniProtKB-EC"/>
</dbReference>
<dbReference type="CDD" id="cd06446">
    <property type="entry name" value="Trp-synth_B"/>
    <property type="match status" value="1"/>
</dbReference>
<dbReference type="FunFam" id="3.40.50.1100:FF:000001">
    <property type="entry name" value="Tryptophan synthase beta chain"/>
    <property type="match status" value="1"/>
</dbReference>
<dbReference type="FunFam" id="3.40.50.1100:FF:000004">
    <property type="entry name" value="Tryptophan synthase beta chain"/>
    <property type="match status" value="1"/>
</dbReference>
<dbReference type="Gene3D" id="3.40.50.1100">
    <property type="match status" value="2"/>
</dbReference>
<dbReference type="HAMAP" id="MF_00133">
    <property type="entry name" value="Trp_synth_beta"/>
    <property type="match status" value="1"/>
</dbReference>
<dbReference type="InterPro" id="IPR006653">
    <property type="entry name" value="Trp_synth_b_CS"/>
</dbReference>
<dbReference type="InterPro" id="IPR006654">
    <property type="entry name" value="Trp_synth_beta"/>
</dbReference>
<dbReference type="InterPro" id="IPR023026">
    <property type="entry name" value="Trp_synth_beta/beta-like"/>
</dbReference>
<dbReference type="InterPro" id="IPR001926">
    <property type="entry name" value="TrpB-like_PALP"/>
</dbReference>
<dbReference type="InterPro" id="IPR036052">
    <property type="entry name" value="TrpB-like_PALP_sf"/>
</dbReference>
<dbReference type="NCBIfam" id="TIGR00263">
    <property type="entry name" value="trpB"/>
    <property type="match status" value="1"/>
</dbReference>
<dbReference type="PANTHER" id="PTHR48077:SF3">
    <property type="entry name" value="TRYPTOPHAN SYNTHASE"/>
    <property type="match status" value="1"/>
</dbReference>
<dbReference type="PANTHER" id="PTHR48077">
    <property type="entry name" value="TRYPTOPHAN SYNTHASE-RELATED"/>
    <property type="match status" value="1"/>
</dbReference>
<dbReference type="Pfam" id="PF00291">
    <property type="entry name" value="PALP"/>
    <property type="match status" value="1"/>
</dbReference>
<dbReference type="PIRSF" id="PIRSF001413">
    <property type="entry name" value="Trp_syn_beta"/>
    <property type="match status" value="1"/>
</dbReference>
<dbReference type="SUPFAM" id="SSF53686">
    <property type="entry name" value="Tryptophan synthase beta subunit-like PLP-dependent enzymes"/>
    <property type="match status" value="1"/>
</dbReference>
<dbReference type="PROSITE" id="PS00168">
    <property type="entry name" value="TRP_SYNTHASE_BETA"/>
    <property type="match status" value="1"/>
</dbReference>
<gene>
    <name type="primary">TSB</name>
</gene>
<proteinExistence type="evidence at transcript level"/>
<comment type="function">
    <text>The beta subunit is responsible for the synthesis of L-tryptophan from indole and L-serine.</text>
</comment>
<comment type="catalytic activity">
    <reaction>
        <text>(1S,2R)-1-C-(indol-3-yl)glycerol 3-phosphate + L-serine = D-glyceraldehyde 3-phosphate + L-tryptophan + H2O</text>
        <dbReference type="Rhea" id="RHEA:10532"/>
        <dbReference type="ChEBI" id="CHEBI:15377"/>
        <dbReference type="ChEBI" id="CHEBI:33384"/>
        <dbReference type="ChEBI" id="CHEBI:57912"/>
        <dbReference type="ChEBI" id="CHEBI:58866"/>
        <dbReference type="ChEBI" id="CHEBI:59776"/>
        <dbReference type="EC" id="4.2.1.20"/>
    </reaction>
</comment>
<comment type="cofactor">
    <cofactor>
        <name>pyridoxal 5'-phosphate</name>
        <dbReference type="ChEBI" id="CHEBI:597326"/>
    </cofactor>
</comment>
<comment type="pathway">
    <text>Amino-acid biosynthesis; L-tryptophan biosynthesis; L-tryptophan from chorismate: step 5/5.</text>
</comment>
<comment type="subunit">
    <text>Tetramer of two alpha and two beta chains.</text>
</comment>
<comment type="subcellular location">
    <subcellularLocation>
        <location evidence="3">Plastid</location>
        <location evidence="3">Chloroplast</location>
    </subcellularLocation>
</comment>
<comment type="similarity">
    <text evidence="3">Belongs to the TrpB family.</text>
</comment>